<feature type="chain" id="PRO_0000439861" description="Nitrate/nitrite transporter NrtP">
    <location>
        <begin position="1"/>
        <end position="500"/>
    </location>
</feature>
<feature type="transmembrane region" description="Helical" evidence="1">
    <location>
        <begin position="19"/>
        <end position="39"/>
    </location>
</feature>
<feature type="transmembrane region" description="Helical" evidence="1">
    <location>
        <begin position="52"/>
        <end position="72"/>
    </location>
</feature>
<feature type="transmembrane region" description="Helical" evidence="1">
    <location>
        <begin position="79"/>
        <end position="99"/>
    </location>
</feature>
<feature type="transmembrane region" description="Helical" evidence="1">
    <location>
        <begin position="109"/>
        <end position="129"/>
    </location>
</feature>
<feature type="transmembrane region" description="Helical" evidence="1">
    <location>
        <begin position="147"/>
        <end position="167"/>
    </location>
</feature>
<feature type="transmembrane region" description="Helical" evidence="1">
    <location>
        <begin position="175"/>
        <end position="195"/>
    </location>
</feature>
<feature type="transmembrane region" description="Helical" evidence="1">
    <location>
        <begin position="220"/>
        <end position="240"/>
    </location>
</feature>
<feature type="transmembrane region" description="Helical" evidence="1">
    <location>
        <begin position="247"/>
        <end position="267"/>
    </location>
</feature>
<feature type="transmembrane region" description="Helical" evidence="1">
    <location>
        <begin position="364"/>
        <end position="384"/>
    </location>
</feature>
<feature type="transmembrane region" description="Helical" evidence="1">
    <location>
        <begin position="389"/>
        <end position="409"/>
    </location>
</feature>
<feature type="transmembrane region" description="Helical" evidence="1">
    <location>
        <begin position="425"/>
        <end position="445"/>
    </location>
</feature>
<feature type="transmembrane region" description="Helical" evidence="1">
    <location>
        <begin position="451"/>
        <end position="471"/>
    </location>
</feature>
<comment type="function">
    <text evidence="2">Transport system for both nitrate and nitrite, with much higher affinity for nitrate than for nitrite.</text>
</comment>
<comment type="subcellular location">
    <subcellularLocation>
        <location evidence="4">Cell inner membrane</location>
        <topology evidence="1">Multi-pass membrane protein</topology>
    </subcellularLocation>
</comment>
<comment type="induction">
    <text evidence="2">Expression is repressed by ammonium.</text>
</comment>
<comment type="similarity">
    <text evidence="4">Belongs to the major facilitator superfamily. Nitrate/nitrite porter (TC 2.A.1.8) family.</text>
</comment>
<protein>
    <recommendedName>
        <fullName evidence="4">Nitrate/nitrite transporter NrtP</fullName>
    </recommendedName>
</protein>
<gene>
    <name evidence="3" type="primary">nrtP</name>
    <name evidence="5" type="ordered locus">Npun_R1527</name>
</gene>
<accession>B2IZT6</accession>
<sequence length="500" mass="55034">MLKKLFSFSDRYRILHQTWFAFFLTFVCWFNFAPFATTIGKELHLAPEQIKTLGICNLALTIPARLIIGMLLDRFGPRITYSILLMFAVVPCLATALAQDFNQLVISRLLMGIVGSGFVVGIRMVAEWFQPKEMGIAQGIYGGWGNFGAFGAEFALPILAISTSFFSGGASNWRLAIALVGIITAIYGVIYYNTVQDTPRGKVYKKPKKNGSLEVTSIKSFWAMMISNFGLIFALGLLAWRLEQKKIHFLTLSQMYLTWLVLAGLFAYQSYKAWQVNRELLTGKKTYPVSERFQFGQVALLEFTYITNFGSELAAVSMLPAFFEKTFGLEHVVAGMIAATYPFLNLVSRPSGGLISDKFGSRKWTMTIISVGIGVSYLMAHFINSNWPIPVAIAVTMFAAYFAQAGCGATYSIVPMIKKEATGQIAGNVGAYGNFGGVVYLTIFSLTDAPTLFSTMGIAALICAFMCAFFLKEPKGSFAPAYEGEASETATKSSVFLTEE</sequence>
<proteinExistence type="evidence at protein level"/>
<keyword id="KW-0997">Cell inner membrane</keyword>
<keyword id="KW-1003">Cell membrane</keyword>
<keyword id="KW-0472">Membrane</keyword>
<keyword id="KW-0534">Nitrate assimilation</keyword>
<keyword id="KW-1185">Reference proteome</keyword>
<keyword id="KW-0812">Transmembrane</keyword>
<keyword id="KW-1133">Transmembrane helix</keyword>
<keyword id="KW-0813">Transport</keyword>
<dbReference type="EMBL" id="CP001037">
    <property type="protein sequence ID" value="ACC80216.1"/>
    <property type="molecule type" value="Genomic_DNA"/>
</dbReference>
<dbReference type="RefSeq" id="WP_012408234.1">
    <property type="nucleotide sequence ID" value="NC_010628.1"/>
</dbReference>
<dbReference type="STRING" id="63737.Npun_R1527"/>
<dbReference type="EnsemblBacteria" id="ACC80216">
    <property type="protein sequence ID" value="ACC80216"/>
    <property type="gene ID" value="Npun_R1527"/>
</dbReference>
<dbReference type="KEGG" id="npu:Npun_R1527"/>
<dbReference type="eggNOG" id="COG2223">
    <property type="taxonomic scope" value="Bacteria"/>
</dbReference>
<dbReference type="HOGENOM" id="CLU_024204_4_1_3"/>
<dbReference type="OrthoDB" id="9773404at2"/>
<dbReference type="PhylomeDB" id="B2IZT6"/>
<dbReference type="Proteomes" id="UP000001191">
    <property type="component" value="Chromosome"/>
</dbReference>
<dbReference type="GO" id="GO:0005886">
    <property type="term" value="C:plasma membrane"/>
    <property type="evidence" value="ECO:0007669"/>
    <property type="project" value="UniProtKB-SubCell"/>
</dbReference>
<dbReference type="GO" id="GO:0015112">
    <property type="term" value="F:nitrate transmembrane transporter activity"/>
    <property type="evidence" value="ECO:0000314"/>
    <property type="project" value="UniProtKB"/>
</dbReference>
<dbReference type="GO" id="GO:0015113">
    <property type="term" value="F:nitrite transmembrane transporter activity"/>
    <property type="evidence" value="ECO:0000314"/>
    <property type="project" value="UniProtKB"/>
</dbReference>
<dbReference type="GO" id="GO:0042128">
    <property type="term" value="P:nitrate assimilation"/>
    <property type="evidence" value="ECO:0007669"/>
    <property type="project" value="UniProtKB-KW"/>
</dbReference>
<dbReference type="GO" id="GO:1902025">
    <property type="term" value="P:nitrate import"/>
    <property type="evidence" value="ECO:0000314"/>
    <property type="project" value="UniProtKB"/>
</dbReference>
<dbReference type="GO" id="GO:0015707">
    <property type="term" value="P:nitrite transport"/>
    <property type="evidence" value="ECO:0000314"/>
    <property type="project" value="UniProtKB"/>
</dbReference>
<dbReference type="FunFam" id="1.20.1250.20:FF:000880">
    <property type="entry name" value="Nitrite transporter NrtP"/>
    <property type="match status" value="1"/>
</dbReference>
<dbReference type="Gene3D" id="1.20.1250.20">
    <property type="entry name" value="MFS general substrate transporter like domains"/>
    <property type="match status" value="2"/>
</dbReference>
<dbReference type="InterPro" id="IPR011701">
    <property type="entry name" value="MFS"/>
</dbReference>
<dbReference type="InterPro" id="IPR020846">
    <property type="entry name" value="MFS_dom"/>
</dbReference>
<dbReference type="InterPro" id="IPR036259">
    <property type="entry name" value="MFS_trans_sf"/>
</dbReference>
<dbReference type="InterPro" id="IPR044772">
    <property type="entry name" value="NO3_transporter"/>
</dbReference>
<dbReference type="InterPro" id="IPR004737">
    <property type="entry name" value="NO3_transporter_NarK/NarU-like"/>
</dbReference>
<dbReference type="NCBIfam" id="TIGR00886">
    <property type="entry name" value="2A0108"/>
    <property type="match status" value="1"/>
</dbReference>
<dbReference type="PANTHER" id="PTHR23515">
    <property type="entry name" value="HIGH-AFFINITY NITRATE TRANSPORTER 2.3"/>
    <property type="match status" value="1"/>
</dbReference>
<dbReference type="Pfam" id="PF07690">
    <property type="entry name" value="MFS_1"/>
    <property type="match status" value="2"/>
</dbReference>
<dbReference type="SUPFAM" id="SSF103473">
    <property type="entry name" value="MFS general substrate transporter"/>
    <property type="match status" value="1"/>
</dbReference>
<dbReference type="PROSITE" id="PS50850">
    <property type="entry name" value="MFS"/>
    <property type="match status" value="1"/>
</dbReference>
<evidence type="ECO:0000255" key="1"/>
<evidence type="ECO:0000269" key="2">
    <source>
    </source>
</evidence>
<evidence type="ECO:0000303" key="3">
    <source>
    </source>
</evidence>
<evidence type="ECO:0000305" key="4"/>
<evidence type="ECO:0000312" key="5">
    <source>
        <dbReference type="EMBL" id="ACC80216.1"/>
    </source>
</evidence>
<organism>
    <name type="scientific">Nostoc punctiforme (strain ATCC 29133 / PCC 73102)</name>
    <dbReference type="NCBI Taxonomy" id="63737"/>
    <lineage>
        <taxon>Bacteria</taxon>
        <taxon>Bacillati</taxon>
        <taxon>Cyanobacteriota</taxon>
        <taxon>Cyanophyceae</taxon>
        <taxon>Nostocales</taxon>
        <taxon>Nostocaceae</taxon>
        <taxon>Nostoc</taxon>
    </lineage>
</organism>
<reference key="1">
    <citation type="journal article" date="2013" name="Plant Physiol.">
        <title>A Nostoc punctiforme Sugar Transporter Necessary to Establish a Cyanobacterium-Plant Symbiosis.</title>
        <authorList>
            <person name="Ekman M."/>
            <person name="Picossi S."/>
            <person name="Campbell E.L."/>
            <person name="Meeks J.C."/>
            <person name="Flores E."/>
        </authorList>
    </citation>
    <scope>NUCLEOTIDE SEQUENCE [LARGE SCALE GENOMIC DNA]</scope>
    <source>
        <strain>ATCC 29133 / PCC 73102</strain>
    </source>
</reference>
<reference key="2">
    <citation type="journal article" date="2006" name="Biosci. Biotechnol. Biochem.">
        <title>Characterization of the nitrate-nitrite transporter of the major facilitator superfamily (the nrtP gene product) from the cyanobacterium Nostoc punctiforme strain ATCC 29133.</title>
        <authorList>
            <person name="Aichi M."/>
            <person name="Yoshihara S."/>
            <person name="Yamashita M."/>
            <person name="Maeda S."/>
            <person name="Nagai K."/>
            <person name="Omata T."/>
        </authorList>
    </citation>
    <scope>FUNCTION AS A PERMEASE</scope>
    <scope>INDUCTION</scope>
    <source>
        <strain>ATCC 29133 / PCC 73102</strain>
    </source>
</reference>
<name>NRTP_NOSP7</name>